<name>YMC3_OENBE</name>
<evidence type="ECO:0000305" key="1"/>
<organism>
    <name type="scientific">Oenothera berteroana</name>
    <name type="common">Bertero's evening primrose</name>
    <dbReference type="NCBI Taxonomy" id="3950"/>
    <lineage>
        <taxon>Eukaryota</taxon>
        <taxon>Viridiplantae</taxon>
        <taxon>Streptophyta</taxon>
        <taxon>Embryophyta</taxon>
        <taxon>Tracheophyta</taxon>
        <taxon>Spermatophyta</taxon>
        <taxon>Magnoliopsida</taxon>
        <taxon>eudicotyledons</taxon>
        <taxon>Gunneridae</taxon>
        <taxon>Pentapetalae</taxon>
        <taxon>rosids</taxon>
        <taxon>malvids</taxon>
        <taxon>Myrtales</taxon>
        <taxon>Onagraceae</taxon>
        <taxon>Onagroideae</taxon>
        <taxon>Onagreae</taxon>
        <taxon>Oenothera</taxon>
    </lineage>
</organism>
<keyword id="KW-0496">Mitochondrion</keyword>
<keyword id="KW-0691">RNA editing</keyword>
<accession>P08747</accession>
<protein>
    <recommendedName>
        <fullName>Uncharacterized 9.2 kDa protein in COXIII region</fullName>
    </recommendedName>
</protein>
<dbReference type="EMBL" id="X04764">
    <property type="protein sequence ID" value="CAA28457.1"/>
    <property type="status" value="ALT_SEQ"/>
    <property type="molecule type" value="Genomic_DNA"/>
</dbReference>
<dbReference type="PIR" id="T09851">
    <property type="entry name" value="T09851"/>
</dbReference>
<dbReference type="GO" id="GO:0005739">
    <property type="term" value="C:mitochondrion"/>
    <property type="evidence" value="ECO:0007669"/>
    <property type="project" value="UniProtKB-SubCell"/>
</dbReference>
<reference key="1">
    <citation type="journal article" date="1987" name="EMBO J.">
        <title>The cytochrome oxidase subunit I and subunit III genes in Oenothera mitochondria are transcribed from identical promoter sequences.</title>
        <authorList>
            <person name="Hiesel R."/>
            <person name="Schobel W."/>
            <person name="Schuster W."/>
            <person name="Brennicke A."/>
        </authorList>
    </citation>
    <scope>NUCLEOTIDE SEQUENCE [GENOMIC DNA]</scope>
    <source>
        <strain>cv. Munzia</strain>
    </source>
</reference>
<feature type="chain" id="PRO_0000196902" description="Uncharacterized 9.2 kDa protein in COXIII region">
    <location>
        <begin position="1"/>
        <end position="79"/>
    </location>
</feature>
<sequence>MQRCDPIRTRPIPPSRHTFIELQGYTDNCHLRAEKVCVPRRSMFVAKQSVTTDWAKVCASKVFFPCNAFRWSTTTALYQ</sequence>
<geneLocation type="mitochondrion"/>
<proteinExistence type="evidence at transcript level"/>
<comment type="subcellular location">
    <subcellularLocation>
        <location evidence="1">Mitochondrion</location>
    </subcellularLocation>
</comment>
<comment type="RNA editing">
    <location>
        <position position="54"/>
    </location>
</comment>